<proteinExistence type="evidence at transcript level"/>
<accession>Q5NCI0</accession>
<accession>A0PJ66</accession>
<accession>Q3TLI5</accession>
<accession>Q8C9K3</accession>
<accession>Q8CBP7</accession>
<accession>Q8CC98</accession>
<sequence length="926" mass="104683">MASPGIEVELLVKGHSDLGEVAPEVKPSDSQTSVAIADLEWREMEGDDCGFHYGDGTNEAQDNDFPTVERSRLQEMLSLLGLETYQAQKLTLQDSLQISFDSMKNWAPQVPKDLPWHFLRKLQALNAEARNTTMVLDVPPEAWPAEKESQAEEEMMYWDPAEDVAADIYSFSELPMPDTPVNPLDLLCALLLSSDTFLQQEVLLKMSLCQFALPLVLPDSENHYHTFLLWALRGVVRTWWFQPLRSLGSFREDSVVLSRVPTFAFVRMDVSSNSKSQLLNAVLSPARRQWDCFWHRDLNLGTNPREISDGLVEISWFFPSGKEDLDVFPEPMAFLNLRGDIGSHWLQFKLLTEVSSAVFILTDNISKKEYKLLYSMKESTTKYYFILSPYRGKRNTNLRFLNRLIPVLKIDHSHVLVKVSSTDSEGFVRRIRAIMCSVARSPCRRVSVEDMAHAARKLGLRVDEDFEECQKAKDRMEKILRKIKDVDAYKRDELRLQGEPARRAAQAEREFCQLQWVPEPPEKHRAELRRRVLELRVQQNGQEPTSGVQEFILGISSPSPSERQYFLRWMEWGLARLGQPRPRQPPETLLTLRPKLGGPSDLTEPLWPEPLGVEHFLREMGQFYEAESCLIEAGRLPAGQRRFAHFPGVAVELLLGGLPLELVDGATLSIPVRWVTGLLKELHTRLDRRSRLVVLSALGVPGTGKSTLLNTMFGLKFATGRSCSPRGAFMQLLPVAEGFSQDLGCDQILVIDSGGLISGALASAGDRFELEASLATLLMGLSNVTVVSLAETKDIPPAVLHAFLRLEKMGHMPNYQFVYQNLHDLPVPSPKPRDRRQLLDPPSDLSRATHLEKQGGGFRTLAGLAERQHVWHIPALWHGAPPMAAVSLGYSEAIFELKRCLLENIRNGLSNQNQNIQQLIELLRRL</sequence>
<organism>
    <name type="scientific">Mus musculus</name>
    <name type="common">Mouse</name>
    <dbReference type="NCBI Taxonomy" id="10090"/>
    <lineage>
        <taxon>Eukaryota</taxon>
        <taxon>Metazoa</taxon>
        <taxon>Chordata</taxon>
        <taxon>Craniata</taxon>
        <taxon>Vertebrata</taxon>
        <taxon>Euteleostomi</taxon>
        <taxon>Mammalia</taxon>
        <taxon>Eutheria</taxon>
        <taxon>Euarchontoglires</taxon>
        <taxon>Glires</taxon>
        <taxon>Rodentia</taxon>
        <taxon>Myomorpha</taxon>
        <taxon>Muroidea</taxon>
        <taxon>Muridae</taxon>
        <taxon>Murinae</taxon>
        <taxon>Mus</taxon>
        <taxon>Mus</taxon>
    </lineage>
</organism>
<keyword id="KW-0025">Alternative splicing</keyword>
<keyword id="KW-0131">Cell cycle</keyword>
<keyword id="KW-0963">Cytoplasm</keyword>
<keyword id="KW-0342">GTP-binding</keyword>
<keyword id="KW-0547">Nucleotide-binding</keyword>
<keyword id="KW-0539">Nucleus</keyword>
<keyword id="KW-0597">Phosphoprotein</keyword>
<keyword id="KW-1185">Reference proteome</keyword>
<dbReference type="EMBL" id="AK033577">
    <property type="protein sequence ID" value="BAC28370.1"/>
    <property type="status" value="ALT_FRAME"/>
    <property type="molecule type" value="mRNA"/>
</dbReference>
<dbReference type="EMBL" id="AK035580">
    <property type="protein sequence ID" value="BAC29111.1"/>
    <property type="molecule type" value="mRNA"/>
</dbReference>
<dbReference type="EMBL" id="AK041953">
    <property type="protein sequence ID" value="BAC31109.1"/>
    <property type="molecule type" value="mRNA"/>
</dbReference>
<dbReference type="EMBL" id="AK166495">
    <property type="protein sequence ID" value="BAE38807.1"/>
    <property type="molecule type" value="mRNA"/>
</dbReference>
<dbReference type="EMBL" id="AL627069">
    <property type="status" value="NOT_ANNOTATED_CDS"/>
    <property type="molecule type" value="Genomic_DNA"/>
</dbReference>
<dbReference type="EMBL" id="BC016589">
    <property type="protein sequence ID" value="AAH16589.1"/>
    <property type="status" value="ALT_SEQ"/>
    <property type="molecule type" value="mRNA"/>
</dbReference>
<dbReference type="CCDS" id="CCDS36104.1">
    <molecule id="Q5NCI0-1"/>
</dbReference>
<dbReference type="CCDS" id="CCDS36105.1">
    <molecule id="Q5NCI0-2"/>
</dbReference>
<dbReference type="RefSeq" id="NP_001071129.1">
    <molecule id="Q5NCI0-2"/>
    <property type="nucleotide sequence ID" value="NM_001077661.1"/>
</dbReference>
<dbReference type="RefSeq" id="NP_001348517.1">
    <molecule id="Q5NCI0-2"/>
    <property type="nucleotide sequence ID" value="NM_001361588.1"/>
</dbReference>
<dbReference type="RefSeq" id="NP_001348518.1">
    <molecule id="Q5NCI0-2"/>
    <property type="nucleotide sequence ID" value="NM_001361589.1"/>
</dbReference>
<dbReference type="RefSeq" id="NP_001348519.1">
    <molecule id="Q5NCI0-2"/>
    <property type="nucleotide sequence ID" value="NM_001361590.1"/>
</dbReference>
<dbReference type="RefSeq" id="NP_001348520.1">
    <molecule id="Q5NCI0-2"/>
    <property type="nucleotide sequence ID" value="NM_001361591.1"/>
</dbReference>
<dbReference type="RefSeq" id="NP_848738.2">
    <molecule id="Q5NCI0-1"/>
    <property type="nucleotide sequence ID" value="NM_178623.3"/>
</dbReference>
<dbReference type="RefSeq" id="XP_006514877.1">
    <property type="nucleotide sequence ID" value="XM_006514814.3"/>
</dbReference>
<dbReference type="RefSeq" id="XP_006514878.1">
    <molecule id="Q5NCI0-2"/>
    <property type="nucleotide sequence ID" value="XM_006514815.4"/>
</dbReference>
<dbReference type="RefSeq" id="XP_011242057.1">
    <molecule id="Q5NCI0-2"/>
    <property type="nucleotide sequence ID" value="XM_011243755.4"/>
</dbReference>
<dbReference type="RefSeq" id="XP_036012899.1">
    <molecule id="Q5NCI0-2"/>
    <property type="nucleotide sequence ID" value="XM_036157006.1"/>
</dbReference>
<dbReference type="BioGRID" id="215114">
    <property type="interactions" value="1"/>
</dbReference>
<dbReference type="FunCoup" id="Q5NCI0">
    <property type="interactions" value="677"/>
</dbReference>
<dbReference type="STRING" id="10090.ENSMUSP00000091053"/>
<dbReference type="iPTMnet" id="Q5NCI0"/>
<dbReference type="PhosphoSitePlus" id="Q5NCI0"/>
<dbReference type="PaxDb" id="10090-ENSMUSP00000091053"/>
<dbReference type="PeptideAtlas" id="Q5NCI0"/>
<dbReference type="ProteomicsDB" id="298206">
    <molecule id="Q5NCI0-1"/>
</dbReference>
<dbReference type="ProteomicsDB" id="298207">
    <molecule id="Q5NCI0-2"/>
</dbReference>
<dbReference type="Pumba" id="Q5NCI0"/>
<dbReference type="Antibodypedia" id="7083">
    <property type="antibodies" value="163 antibodies from 25 providers"/>
</dbReference>
<dbReference type="DNASU" id="72046"/>
<dbReference type="Ensembl" id="ENSMUST00000093362.12">
    <molecule id="Q5NCI0-1"/>
    <property type="protein sequence ID" value="ENSMUSP00000091053.6"/>
    <property type="gene ID" value="ENSMUSG00000049680.19"/>
</dbReference>
<dbReference type="Ensembl" id="ENSMUST00000118076.8">
    <molecule id="Q5NCI0-2"/>
    <property type="protein sequence ID" value="ENSMUSP00000113589.2"/>
    <property type="gene ID" value="ENSMUSG00000049680.19"/>
</dbReference>
<dbReference type="Ensembl" id="ENSMUST00000120306.8">
    <molecule id="Q5NCI0-2"/>
    <property type="protein sequence ID" value="ENSMUSP00000113060.2"/>
    <property type="gene ID" value="ENSMUSG00000049680.19"/>
</dbReference>
<dbReference type="GeneID" id="72046"/>
<dbReference type="KEGG" id="mmu:72046"/>
<dbReference type="UCSC" id="uc007hwu.1">
    <molecule id="Q5NCI0-1"/>
    <property type="organism name" value="mouse"/>
</dbReference>
<dbReference type="AGR" id="MGI:1919296"/>
<dbReference type="CTD" id="55665"/>
<dbReference type="MGI" id="MGI:1919296">
    <property type="gene designation" value="Urgcp"/>
</dbReference>
<dbReference type="VEuPathDB" id="HostDB:ENSMUSG00000049680"/>
<dbReference type="eggNOG" id="ENOG502QU4G">
    <property type="taxonomic scope" value="Eukaryota"/>
</dbReference>
<dbReference type="GeneTree" id="ENSGT00940000154390"/>
<dbReference type="HOGENOM" id="CLU_002276_0_0_1"/>
<dbReference type="InParanoid" id="Q5NCI0"/>
<dbReference type="OMA" id="QENTDGT"/>
<dbReference type="OrthoDB" id="1597724at2759"/>
<dbReference type="PhylomeDB" id="Q5NCI0"/>
<dbReference type="TreeFam" id="TF335271"/>
<dbReference type="BioGRID-ORCS" id="72046">
    <property type="hits" value="5 hits in 77 CRISPR screens"/>
</dbReference>
<dbReference type="ChiTaRS" id="Urgcp">
    <property type="organism name" value="mouse"/>
</dbReference>
<dbReference type="PRO" id="PR:Q5NCI0"/>
<dbReference type="Proteomes" id="UP000000589">
    <property type="component" value="Chromosome 11"/>
</dbReference>
<dbReference type="RNAct" id="Q5NCI0">
    <property type="molecule type" value="protein"/>
</dbReference>
<dbReference type="Bgee" id="ENSMUSG00000049680">
    <property type="expression patterns" value="Expressed in substantia nigra and 222 other cell types or tissues"/>
</dbReference>
<dbReference type="ExpressionAtlas" id="Q5NCI0">
    <property type="expression patterns" value="baseline and differential"/>
</dbReference>
<dbReference type="GO" id="GO:0005829">
    <property type="term" value="C:cytosol"/>
    <property type="evidence" value="ECO:0007669"/>
    <property type="project" value="Ensembl"/>
</dbReference>
<dbReference type="GO" id="GO:0005634">
    <property type="term" value="C:nucleus"/>
    <property type="evidence" value="ECO:0007669"/>
    <property type="project" value="UniProtKB-SubCell"/>
</dbReference>
<dbReference type="GO" id="GO:0005525">
    <property type="term" value="F:GTP binding"/>
    <property type="evidence" value="ECO:0007669"/>
    <property type="project" value="UniProtKB-KW"/>
</dbReference>
<dbReference type="FunFam" id="3.40.50.300:FF:000954">
    <property type="entry name" value="Upregulator of cell proliferation"/>
    <property type="match status" value="1"/>
</dbReference>
<dbReference type="Gene3D" id="3.40.50.300">
    <property type="entry name" value="P-loop containing nucleotide triphosphate hydrolases"/>
    <property type="match status" value="1"/>
</dbReference>
<dbReference type="InterPro" id="IPR030383">
    <property type="entry name" value="G_VLIG_dom"/>
</dbReference>
<dbReference type="InterPro" id="IPR006073">
    <property type="entry name" value="GTP-bd"/>
</dbReference>
<dbReference type="InterPro" id="IPR027417">
    <property type="entry name" value="P-loop_NTPase"/>
</dbReference>
<dbReference type="PANTHER" id="PTHR22796:SF13">
    <property type="entry name" value="UP-REGULATOR OF CELL PROLIFERATION"/>
    <property type="match status" value="1"/>
</dbReference>
<dbReference type="PANTHER" id="PTHR22796">
    <property type="entry name" value="URG4-RELATED"/>
    <property type="match status" value="1"/>
</dbReference>
<dbReference type="Pfam" id="PF25496">
    <property type="entry name" value="URGCP"/>
    <property type="match status" value="1"/>
</dbReference>
<dbReference type="PRINTS" id="PR00326">
    <property type="entry name" value="GTP1OBG"/>
</dbReference>
<dbReference type="SUPFAM" id="SSF52540">
    <property type="entry name" value="P-loop containing nucleoside triphosphate hydrolases"/>
    <property type="match status" value="1"/>
</dbReference>
<dbReference type="PROSITE" id="PS51717">
    <property type="entry name" value="G_VLIG"/>
    <property type="match status" value="1"/>
</dbReference>
<gene>
    <name type="primary">Urgcp</name>
    <name type="synonym">Urg4</name>
</gene>
<protein>
    <recommendedName>
        <fullName>Up-regulator of cell proliferation</fullName>
    </recommendedName>
    <alternativeName>
        <fullName>HBV X protein up-regulated gene 4 protein homolog</fullName>
    </alternativeName>
    <alternativeName>
        <fullName>HBxAg up-regulated gene 4 protein homolog</fullName>
    </alternativeName>
</protein>
<feature type="chain" id="PRO_0000337149" description="Up-regulator of cell proliferation">
    <location>
        <begin position="1"/>
        <end position="926"/>
    </location>
</feature>
<feature type="domain" description="VLIG-type G" evidence="3">
    <location>
        <begin position="689"/>
        <end position="924"/>
    </location>
</feature>
<feature type="modified residue" description="Phosphoserine" evidence="2">
    <location>
        <position position="3"/>
    </location>
</feature>
<feature type="splice variant" id="VSP_052800" description="In isoform 2." evidence="5">
    <location>
        <begin position="1"/>
        <end position="43"/>
    </location>
</feature>
<feature type="sequence conflict" description="In Ref. 1; BAE38807." evidence="6" ref="1">
    <original>A</original>
    <variation>T</variation>
    <location>
        <position position="60"/>
    </location>
</feature>
<feature type="sequence conflict" description="In Ref. 1; BAC29111." evidence="6" ref="1">
    <original>D</original>
    <variation>Y</variation>
    <location>
        <position position="291"/>
    </location>
</feature>
<feature type="sequence conflict" description="In Ref. 1; BAC29111." evidence="6" ref="1">
    <original>P</original>
    <variation>T</variation>
    <location>
        <position position="518"/>
    </location>
</feature>
<feature type="sequence conflict" description="In Ref. 1; BAE38807." evidence="6" ref="1">
    <original>T</original>
    <variation>A</variation>
    <location>
        <position position="684"/>
    </location>
</feature>
<comment type="function">
    <text evidence="1">May be involved in cell cycle progression through the regulation of cyclin D1 expression.</text>
</comment>
<comment type="subcellular location">
    <subcellularLocation>
        <location evidence="2">Cytoplasm</location>
    </subcellularLocation>
    <subcellularLocation>
        <location evidence="2">Nucleus</location>
    </subcellularLocation>
    <text evidence="1">In epithelial cells localized predominantly in the cytoplasm and occasionally in nuclei.</text>
</comment>
<comment type="alternative products">
    <event type="alternative splicing"/>
    <isoform>
        <id>Q5NCI0-1</id>
        <name evidence="4">1</name>
        <sequence type="displayed"/>
    </isoform>
    <isoform>
        <id>Q5NCI0-2</id>
        <name evidence="4">2</name>
        <sequence type="described" ref="VSP_052800"/>
    </isoform>
</comment>
<comment type="similarity">
    <text evidence="6">Belongs to the TRAFAC class dynamin-like GTPase superfamily. Very large inducible GTPase (VLIG) family.</text>
</comment>
<comment type="sequence caution" evidence="6">
    <conflict type="miscellaneous discrepancy">
        <sequence resource="EMBL-CDS" id="AAH16589"/>
    </conflict>
    <text>Contaminating sequence. Potential poly-A sequence.</text>
</comment>
<comment type="sequence caution" evidence="6">
    <conflict type="frameshift">
        <sequence resource="EMBL-CDS" id="BAC28370"/>
    </conflict>
</comment>
<reference evidence="6 11" key="1">
    <citation type="journal article" date="2005" name="Science">
        <title>The transcriptional landscape of the mammalian genome.</title>
        <authorList>
            <person name="Carninci P."/>
            <person name="Kasukawa T."/>
            <person name="Katayama S."/>
            <person name="Gough J."/>
            <person name="Frith M.C."/>
            <person name="Maeda N."/>
            <person name="Oyama R."/>
            <person name="Ravasi T."/>
            <person name="Lenhard B."/>
            <person name="Wells C."/>
            <person name="Kodzius R."/>
            <person name="Shimokawa K."/>
            <person name="Bajic V.B."/>
            <person name="Brenner S.E."/>
            <person name="Batalov S."/>
            <person name="Forrest A.R."/>
            <person name="Zavolan M."/>
            <person name="Davis M.J."/>
            <person name="Wilming L.G."/>
            <person name="Aidinis V."/>
            <person name="Allen J.E."/>
            <person name="Ambesi-Impiombato A."/>
            <person name="Apweiler R."/>
            <person name="Aturaliya R.N."/>
            <person name="Bailey T.L."/>
            <person name="Bansal M."/>
            <person name="Baxter L."/>
            <person name="Beisel K.W."/>
            <person name="Bersano T."/>
            <person name="Bono H."/>
            <person name="Chalk A.M."/>
            <person name="Chiu K.P."/>
            <person name="Choudhary V."/>
            <person name="Christoffels A."/>
            <person name="Clutterbuck D.R."/>
            <person name="Crowe M.L."/>
            <person name="Dalla E."/>
            <person name="Dalrymple B.P."/>
            <person name="de Bono B."/>
            <person name="Della Gatta G."/>
            <person name="di Bernardo D."/>
            <person name="Down T."/>
            <person name="Engstrom P."/>
            <person name="Fagiolini M."/>
            <person name="Faulkner G."/>
            <person name="Fletcher C.F."/>
            <person name="Fukushima T."/>
            <person name="Furuno M."/>
            <person name="Futaki S."/>
            <person name="Gariboldi M."/>
            <person name="Georgii-Hemming P."/>
            <person name="Gingeras T.R."/>
            <person name="Gojobori T."/>
            <person name="Green R.E."/>
            <person name="Gustincich S."/>
            <person name="Harbers M."/>
            <person name="Hayashi Y."/>
            <person name="Hensch T.K."/>
            <person name="Hirokawa N."/>
            <person name="Hill D."/>
            <person name="Huminiecki L."/>
            <person name="Iacono M."/>
            <person name="Ikeo K."/>
            <person name="Iwama A."/>
            <person name="Ishikawa T."/>
            <person name="Jakt M."/>
            <person name="Kanapin A."/>
            <person name="Katoh M."/>
            <person name="Kawasawa Y."/>
            <person name="Kelso J."/>
            <person name="Kitamura H."/>
            <person name="Kitano H."/>
            <person name="Kollias G."/>
            <person name="Krishnan S.P."/>
            <person name="Kruger A."/>
            <person name="Kummerfeld S.K."/>
            <person name="Kurochkin I.V."/>
            <person name="Lareau L.F."/>
            <person name="Lazarevic D."/>
            <person name="Lipovich L."/>
            <person name="Liu J."/>
            <person name="Liuni S."/>
            <person name="McWilliam S."/>
            <person name="Madan Babu M."/>
            <person name="Madera M."/>
            <person name="Marchionni L."/>
            <person name="Matsuda H."/>
            <person name="Matsuzawa S."/>
            <person name="Miki H."/>
            <person name="Mignone F."/>
            <person name="Miyake S."/>
            <person name="Morris K."/>
            <person name="Mottagui-Tabar S."/>
            <person name="Mulder N."/>
            <person name="Nakano N."/>
            <person name="Nakauchi H."/>
            <person name="Ng P."/>
            <person name="Nilsson R."/>
            <person name="Nishiguchi S."/>
            <person name="Nishikawa S."/>
            <person name="Nori F."/>
            <person name="Ohara O."/>
            <person name="Okazaki Y."/>
            <person name="Orlando V."/>
            <person name="Pang K.C."/>
            <person name="Pavan W.J."/>
            <person name="Pavesi G."/>
            <person name="Pesole G."/>
            <person name="Petrovsky N."/>
            <person name="Piazza S."/>
            <person name="Reed J."/>
            <person name="Reid J.F."/>
            <person name="Ring B.Z."/>
            <person name="Ringwald M."/>
            <person name="Rost B."/>
            <person name="Ruan Y."/>
            <person name="Salzberg S.L."/>
            <person name="Sandelin A."/>
            <person name="Schneider C."/>
            <person name="Schoenbach C."/>
            <person name="Sekiguchi K."/>
            <person name="Semple C.A."/>
            <person name="Seno S."/>
            <person name="Sessa L."/>
            <person name="Sheng Y."/>
            <person name="Shibata Y."/>
            <person name="Shimada H."/>
            <person name="Shimada K."/>
            <person name="Silva D."/>
            <person name="Sinclair B."/>
            <person name="Sperling S."/>
            <person name="Stupka E."/>
            <person name="Sugiura K."/>
            <person name="Sultana R."/>
            <person name="Takenaka Y."/>
            <person name="Taki K."/>
            <person name="Tammoja K."/>
            <person name="Tan S.L."/>
            <person name="Tang S."/>
            <person name="Taylor M.S."/>
            <person name="Tegner J."/>
            <person name="Teichmann S.A."/>
            <person name="Ueda H.R."/>
            <person name="van Nimwegen E."/>
            <person name="Verardo R."/>
            <person name="Wei C.L."/>
            <person name="Yagi K."/>
            <person name="Yamanishi H."/>
            <person name="Zabarovsky E."/>
            <person name="Zhu S."/>
            <person name="Zimmer A."/>
            <person name="Hide W."/>
            <person name="Bult C."/>
            <person name="Grimmond S.M."/>
            <person name="Teasdale R.D."/>
            <person name="Liu E.T."/>
            <person name="Brusic V."/>
            <person name="Quackenbush J."/>
            <person name="Wahlestedt C."/>
            <person name="Mattick J.S."/>
            <person name="Hume D.A."/>
            <person name="Kai C."/>
            <person name="Sasaki D."/>
            <person name="Tomaru Y."/>
            <person name="Fukuda S."/>
            <person name="Kanamori-Katayama M."/>
            <person name="Suzuki M."/>
            <person name="Aoki J."/>
            <person name="Arakawa T."/>
            <person name="Iida J."/>
            <person name="Imamura K."/>
            <person name="Itoh M."/>
            <person name="Kato T."/>
            <person name="Kawaji H."/>
            <person name="Kawagashira N."/>
            <person name="Kawashima T."/>
            <person name="Kojima M."/>
            <person name="Kondo S."/>
            <person name="Konno H."/>
            <person name="Nakano K."/>
            <person name="Ninomiya N."/>
            <person name="Nishio T."/>
            <person name="Okada M."/>
            <person name="Plessy C."/>
            <person name="Shibata K."/>
            <person name="Shiraki T."/>
            <person name="Suzuki S."/>
            <person name="Tagami M."/>
            <person name="Waki K."/>
            <person name="Watahiki A."/>
            <person name="Okamura-Oho Y."/>
            <person name="Suzuki H."/>
            <person name="Kawai J."/>
            <person name="Hayashizaki Y."/>
        </authorList>
    </citation>
    <scope>NUCLEOTIDE SEQUENCE [LARGE SCALE MRNA] (ISOFORMS 1 AND 2)</scope>
    <source>
        <strain evidence="10">C57BL/6J</strain>
        <tissue evidence="8">Cecum</tissue>
        <tissue evidence="11">Mammary gland</tissue>
        <tissue evidence="10">Thymus</tissue>
        <tissue evidence="9">Urinary bladder</tissue>
    </source>
</reference>
<reference key="2">
    <citation type="journal article" date="2009" name="PLoS Biol.">
        <title>Lineage-specific biology revealed by a finished genome assembly of the mouse.</title>
        <authorList>
            <person name="Church D.M."/>
            <person name="Goodstadt L."/>
            <person name="Hillier L.W."/>
            <person name="Zody M.C."/>
            <person name="Goldstein S."/>
            <person name="She X."/>
            <person name="Bult C.J."/>
            <person name="Agarwala R."/>
            <person name="Cherry J.L."/>
            <person name="DiCuccio M."/>
            <person name="Hlavina W."/>
            <person name="Kapustin Y."/>
            <person name="Meric P."/>
            <person name="Maglott D."/>
            <person name="Birtle Z."/>
            <person name="Marques A.C."/>
            <person name="Graves T."/>
            <person name="Zhou S."/>
            <person name="Teague B."/>
            <person name="Potamousis K."/>
            <person name="Churas C."/>
            <person name="Place M."/>
            <person name="Herschleb J."/>
            <person name="Runnheim R."/>
            <person name="Forrest D."/>
            <person name="Amos-Landgraf J."/>
            <person name="Schwartz D.C."/>
            <person name="Cheng Z."/>
            <person name="Lindblad-Toh K."/>
            <person name="Eichler E.E."/>
            <person name="Ponting C.P."/>
        </authorList>
    </citation>
    <scope>NUCLEOTIDE SEQUENCE [LARGE SCALE GENOMIC DNA]</scope>
    <source>
        <strain>C57BL/6J</strain>
    </source>
</reference>
<reference evidence="6 7" key="3">
    <citation type="journal article" date="2004" name="Genome Res.">
        <title>The status, quality, and expansion of the NIH full-length cDNA project: the Mammalian Gene Collection (MGC).</title>
        <authorList>
            <consortium name="The MGC Project Team"/>
        </authorList>
    </citation>
    <scope>NUCLEOTIDE SEQUENCE [LARGE SCALE MRNA] OF 518-816 (ISOFORMS 1/2)</scope>
    <source>
        <tissue evidence="7">Mammary tumor</tissue>
    </source>
</reference>
<evidence type="ECO:0000250" key="1"/>
<evidence type="ECO:0000250" key="2">
    <source>
        <dbReference type="UniProtKB" id="Q8TCY9"/>
    </source>
</evidence>
<evidence type="ECO:0000255" key="3">
    <source>
        <dbReference type="PROSITE-ProRule" id="PRU01054"/>
    </source>
</evidence>
<evidence type="ECO:0000269" key="4">
    <source>
    </source>
</evidence>
<evidence type="ECO:0000303" key="5">
    <source>
    </source>
</evidence>
<evidence type="ECO:0000305" key="6"/>
<evidence type="ECO:0000312" key="7">
    <source>
        <dbReference type="EMBL" id="AAH16589.1"/>
    </source>
</evidence>
<evidence type="ECO:0000312" key="8">
    <source>
        <dbReference type="EMBL" id="BAC28370.1"/>
    </source>
</evidence>
<evidence type="ECO:0000312" key="9">
    <source>
        <dbReference type="EMBL" id="BAC29111.1"/>
    </source>
</evidence>
<evidence type="ECO:0000312" key="10">
    <source>
        <dbReference type="EMBL" id="BAC31109.1"/>
    </source>
</evidence>
<evidence type="ECO:0000312" key="11">
    <source>
        <dbReference type="EMBL" id="BAE38807.1"/>
    </source>
</evidence>
<name>URGCP_MOUSE</name>